<reference key="1">
    <citation type="journal article" date="2010" name="Zoology">
        <title>Transcriptome analysis of the venom glands of the Chinese wolf spider Lycosa singoriensis.</title>
        <authorList>
            <person name="Zhang Y."/>
            <person name="Chen J."/>
            <person name="Tang X."/>
            <person name="Wang F."/>
            <person name="Jiang L."/>
            <person name="Xiong X."/>
            <person name="Wang M."/>
            <person name="Rong M."/>
            <person name="Liu Z."/>
            <person name="Liang S."/>
        </authorList>
    </citation>
    <scope>NUCLEOTIDE SEQUENCE [LARGE SCALE MRNA]</scope>
    <source>
        <tissue>Venom gland</tissue>
    </source>
</reference>
<proteinExistence type="evidence at transcript level"/>
<dbReference type="EMBL" id="EU926105">
    <property type="protein sequence ID" value="ACI41437.1"/>
    <property type="molecule type" value="mRNA"/>
</dbReference>
<dbReference type="EMBL" id="FM864109">
    <property type="protein sequence ID" value="CAS03706.1"/>
    <property type="molecule type" value="mRNA"/>
</dbReference>
<dbReference type="SMR" id="B6DD21"/>
<dbReference type="ArachnoServer" id="AS001042">
    <property type="toxin name" value="U13-lycotoxin-Ls1a"/>
</dbReference>
<dbReference type="GO" id="GO:0005576">
    <property type="term" value="C:extracellular region"/>
    <property type="evidence" value="ECO:0007669"/>
    <property type="project" value="UniProtKB-SubCell"/>
</dbReference>
<dbReference type="GO" id="GO:0090729">
    <property type="term" value="F:toxin activity"/>
    <property type="evidence" value="ECO:0007669"/>
    <property type="project" value="UniProtKB-KW"/>
</dbReference>
<accession>B6DD21</accession>
<keyword id="KW-1015">Disulfide bond</keyword>
<keyword id="KW-0960">Knottin</keyword>
<keyword id="KW-0964">Secreted</keyword>
<keyword id="KW-0732">Signal</keyword>
<keyword id="KW-0800">Toxin</keyword>
<name>TXD03_LYCSI</name>
<protein>
    <recommendedName>
        <fullName>U13-lycotoxin-Ls1a</fullName>
    </recommendedName>
    <alternativeName>
        <fullName>Toxin-like structure LSTX-L3</fullName>
    </alternativeName>
</protein>
<feature type="signal peptide" evidence="2">
    <location>
        <begin position="1"/>
        <end position="16"/>
    </location>
</feature>
<feature type="propeptide" id="PRO_0000401861" evidence="1">
    <location>
        <begin position="17"/>
        <end position="54"/>
    </location>
</feature>
<feature type="chain" id="PRO_0000401862" description="U13-lycotoxin-Ls1a">
    <location>
        <begin position="55"/>
        <end position="120"/>
    </location>
</feature>
<feature type="domain" description="Agouti">
    <location>
        <begin position="56"/>
        <end position="95"/>
    </location>
</feature>
<feature type="disulfide bond" evidence="1">
    <location>
        <begin position="56"/>
        <end position="70"/>
    </location>
</feature>
<feature type="disulfide bond" evidence="1">
    <location>
        <begin position="63"/>
        <end position="76"/>
    </location>
</feature>
<feature type="disulfide bond" evidence="1">
    <location>
        <begin position="69"/>
        <end position="87"/>
    </location>
</feature>
<feature type="disulfide bond" evidence="1">
    <location>
        <begin position="78"/>
        <end position="85"/>
    </location>
</feature>
<organism>
    <name type="scientific">Lycosa singoriensis</name>
    <name type="common">Wolf spider</name>
    <name type="synonym">Aranea singoriensis</name>
    <dbReference type="NCBI Taxonomy" id="434756"/>
    <lineage>
        <taxon>Eukaryota</taxon>
        <taxon>Metazoa</taxon>
        <taxon>Ecdysozoa</taxon>
        <taxon>Arthropoda</taxon>
        <taxon>Chelicerata</taxon>
        <taxon>Arachnida</taxon>
        <taxon>Araneae</taxon>
        <taxon>Araneomorphae</taxon>
        <taxon>Entelegynae</taxon>
        <taxon>Lycosoidea</taxon>
        <taxon>Lycosidae</taxon>
        <taxon>Lycosa</taxon>
    </lineage>
</organism>
<evidence type="ECO:0000250" key="1"/>
<evidence type="ECO:0000255" key="2"/>
<evidence type="ECO:0000305" key="3"/>
<comment type="subcellular location">
    <subcellularLocation>
        <location evidence="1">Secreted</location>
    </subcellularLocation>
</comment>
<comment type="tissue specificity">
    <text>Expressed by the venom gland.</text>
</comment>
<comment type="domain">
    <text evidence="1">The presence of a 'disulfide through disulfide kOR' structurally defines this protein as a knottin.</text>
</comment>
<comment type="PTM">
    <text evidence="3">Contains 6 disulfide bonds.</text>
</comment>
<comment type="similarity">
    <text evidence="3">Belongs to the neurotoxin 05 (agouti) family.</text>
</comment>
<sequence>MKTLFVLISILYAVYCFSSEEDVDSAYLANELEPVEDINSEQYAALEPKEEQERSCADMGQDCKDDCDCCLNIATCNCWFGRYFCSCTFGDYQTCLRKKGKCKRNRPQSCPRSNLNRKKG</sequence>